<protein>
    <recommendedName>
        <fullName evidence="2">D-alanine--D-alanine ligase</fullName>
        <ecNumber evidence="2">6.3.2.4</ecNumber>
    </recommendedName>
    <alternativeName>
        <fullName evidence="2">D-Ala-D-Ala ligase</fullName>
    </alternativeName>
    <alternativeName>
        <fullName evidence="2">D-alanylalanine synthetase</fullName>
    </alternativeName>
</protein>
<sequence length="364" mass="40299">MKTRVGVLYGGKSPEHQVSLSTARAVMNAIDPHKFDVIPIYITPEGQWIKGKRLTGTVEEVKQLQFTSTATAMIPVSLNQVPASGSATESDEETIDVIFPLLHGPNGEDGTVQGLLEMLNLPYVGNGVLASAVGMDKVVMKNLFAQAGLRQAKYVSVTKYEWKKGGEAVYDRIEQELGYPCFVKPANAGSSVGISKCKQRDDLKTAFAEAFKYDRKIIIEESIVGREIEIGVIGNDEPICSVAGEIVPKKEFYDYEAKYEDGQTELIIPANVTEEQYETIKSMAIAAFKALDLSGLARVDFFLAEDGTVYINEVNTMPGFTPYSMFPLLWQHSGVPYSELIERLIALALERHQEKQMITYTFEK</sequence>
<proteinExistence type="inferred from homology"/>
<organism>
    <name type="scientific">Geobacillus thermodenitrificans (strain NG80-2)</name>
    <dbReference type="NCBI Taxonomy" id="420246"/>
    <lineage>
        <taxon>Bacteria</taxon>
        <taxon>Bacillati</taxon>
        <taxon>Bacillota</taxon>
        <taxon>Bacilli</taxon>
        <taxon>Bacillales</taxon>
        <taxon>Anoxybacillaceae</taxon>
        <taxon>Geobacillus</taxon>
    </lineage>
</organism>
<reference key="1">
    <citation type="journal article" date="2007" name="Proc. Natl. Acad. Sci. U.S.A.">
        <title>Genome and proteome of long-chain alkane degrading Geobacillus thermodenitrificans NG80-2 isolated from a deep-subsurface oil reservoir.</title>
        <authorList>
            <person name="Feng L."/>
            <person name="Wang W."/>
            <person name="Cheng J."/>
            <person name="Ren Y."/>
            <person name="Zhao G."/>
            <person name="Gao C."/>
            <person name="Tang Y."/>
            <person name="Liu X."/>
            <person name="Han W."/>
            <person name="Peng X."/>
            <person name="Liu R."/>
            <person name="Wang L."/>
        </authorList>
    </citation>
    <scope>NUCLEOTIDE SEQUENCE [LARGE SCALE GENOMIC DNA]</scope>
    <source>
        <strain>NG80-2</strain>
    </source>
</reference>
<gene>
    <name evidence="2" type="primary">ddl</name>
    <name type="ordered locus">GTNG_0198</name>
</gene>
<feature type="chain" id="PRO_1000030450" description="D-alanine--D-alanine ligase">
    <location>
        <begin position="1"/>
        <end position="364"/>
    </location>
</feature>
<feature type="domain" description="ATP-grasp" evidence="2">
    <location>
        <begin position="141"/>
        <end position="346"/>
    </location>
</feature>
<feature type="binding site" evidence="2">
    <location>
        <begin position="174"/>
        <end position="229"/>
    </location>
    <ligand>
        <name>ATP</name>
        <dbReference type="ChEBI" id="CHEBI:30616"/>
    </ligand>
</feature>
<feature type="binding site" evidence="2">
    <location>
        <position position="300"/>
    </location>
    <ligand>
        <name>Mg(2+)</name>
        <dbReference type="ChEBI" id="CHEBI:18420"/>
        <label>1</label>
    </ligand>
</feature>
<feature type="binding site" evidence="2">
    <location>
        <position position="313"/>
    </location>
    <ligand>
        <name>Mg(2+)</name>
        <dbReference type="ChEBI" id="CHEBI:18420"/>
        <label>1</label>
    </ligand>
</feature>
<feature type="binding site" evidence="2">
    <location>
        <position position="313"/>
    </location>
    <ligand>
        <name>Mg(2+)</name>
        <dbReference type="ChEBI" id="CHEBI:18420"/>
        <label>2</label>
    </ligand>
</feature>
<feature type="binding site" evidence="2">
    <location>
        <position position="315"/>
    </location>
    <ligand>
        <name>Mg(2+)</name>
        <dbReference type="ChEBI" id="CHEBI:18420"/>
        <label>2</label>
    </ligand>
</feature>
<evidence type="ECO:0000250" key="1"/>
<evidence type="ECO:0000255" key="2">
    <source>
        <dbReference type="HAMAP-Rule" id="MF_00047"/>
    </source>
</evidence>
<keyword id="KW-0067">ATP-binding</keyword>
<keyword id="KW-0133">Cell shape</keyword>
<keyword id="KW-0961">Cell wall biogenesis/degradation</keyword>
<keyword id="KW-0963">Cytoplasm</keyword>
<keyword id="KW-0436">Ligase</keyword>
<keyword id="KW-0460">Magnesium</keyword>
<keyword id="KW-0464">Manganese</keyword>
<keyword id="KW-0479">Metal-binding</keyword>
<keyword id="KW-0547">Nucleotide-binding</keyword>
<keyword id="KW-0573">Peptidoglycan synthesis</keyword>
<name>DDL_GEOTN</name>
<accession>A4IJS8</accession>
<dbReference type="EC" id="6.3.2.4" evidence="2"/>
<dbReference type="EMBL" id="CP000557">
    <property type="protein sequence ID" value="ABO65582.1"/>
    <property type="molecule type" value="Genomic_DNA"/>
</dbReference>
<dbReference type="RefSeq" id="WP_008881482.1">
    <property type="nucleotide sequence ID" value="NC_009328.1"/>
</dbReference>
<dbReference type="SMR" id="A4IJS8"/>
<dbReference type="GeneID" id="87622213"/>
<dbReference type="KEGG" id="gtn:GTNG_0198"/>
<dbReference type="eggNOG" id="COG1181">
    <property type="taxonomic scope" value="Bacteria"/>
</dbReference>
<dbReference type="HOGENOM" id="CLU_039268_0_0_9"/>
<dbReference type="UniPathway" id="UPA00219"/>
<dbReference type="Proteomes" id="UP000001578">
    <property type="component" value="Chromosome"/>
</dbReference>
<dbReference type="GO" id="GO:0005829">
    <property type="term" value="C:cytosol"/>
    <property type="evidence" value="ECO:0007669"/>
    <property type="project" value="TreeGrafter"/>
</dbReference>
<dbReference type="GO" id="GO:0005524">
    <property type="term" value="F:ATP binding"/>
    <property type="evidence" value="ECO:0007669"/>
    <property type="project" value="UniProtKB-KW"/>
</dbReference>
<dbReference type="GO" id="GO:0008716">
    <property type="term" value="F:D-alanine-D-alanine ligase activity"/>
    <property type="evidence" value="ECO:0007669"/>
    <property type="project" value="UniProtKB-UniRule"/>
</dbReference>
<dbReference type="GO" id="GO:0046872">
    <property type="term" value="F:metal ion binding"/>
    <property type="evidence" value="ECO:0007669"/>
    <property type="project" value="UniProtKB-KW"/>
</dbReference>
<dbReference type="GO" id="GO:0071555">
    <property type="term" value="P:cell wall organization"/>
    <property type="evidence" value="ECO:0007669"/>
    <property type="project" value="UniProtKB-KW"/>
</dbReference>
<dbReference type="GO" id="GO:0009252">
    <property type="term" value="P:peptidoglycan biosynthetic process"/>
    <property type="evidence" value="ECO:0007669"/>
    <property type="project" value="UniProtKB-UniRule"/>
</dbReference>
<dbReference type="GO" id="GO:0008360">
    <property type="term" value="P:regulation of cell shape"/>
    <property type="evidence" value="ECO:0007669"/>
    <property type="project" value="UniProtKB-KW"/>
</dbReference>
<dbReference type="FunFam" id="3.30.1490.20:FF:000007">
    <property type="entry name" value="D-alanine--D-alanine ligase"/>
    <property type="match status" value="1"/>
</dbReference>
<dbReference type="FunFam" id="3.30.470.20:FF:000008">
    <property type="entry name" value="D-alanine--D-alanine ligase"/>
    <property type="match status" value="1"/>
</dbReference>
<dbReference type="Gene3D" id="3.40.50.20">
    <property type="match status" value="1"/>
</dbReference>
<dbReference type="Gene3D" id="3.30.1490.20">
    <property type="entry name" value="ATP-grasp fold, A domain"/>
    <property type="match status" value="1"/>
</dbReference>
<dbReference type="Gene3D" id="3.30.470.20">
    <property type="entry name" value="ATP-grasp fold, B domain"/>
    <property type="match status" value="1"/>
</dbReference>
<dbReference type="HAMAP" id="MF_00047">
    <property type="entry name" value="Dala_Dala_lig"/>
    <property type="match status" value="1"/>
</dbReference>
<dbReference type="InterPro" id="IPR011761">
    <property type="entry name" value="ATP-grasp"/>
</dbReference>
<dbReference type="InterPro" id="IPR013815">
    <property type="entry name" value="ATP_grasp_subdomain_1"/>
</dbReference>
<dbReference type="InterPro" id="IPR000291">
    <property type="entry name" value="D-Ala_lig_Van_CS"/>
</dbReference>
<dbReference type="InterPro" id="IPR005905">
    <property type="entry name" value="D_ala_D_ala"/>
</dbReference>
<dbReference type="InterPro" id="IPR011095">
    <property type="entry name" value="Dala_Dala_lig_C"/>
</dbReference>
<dbReference type="InterPro" id="IPR011127">
    <property type="entry name" value="Dala_Dala_lig_N"/>
</dbReference>
<dbReference type="InterPro" id="IPR016185">
    <property type="entry name" value="PreATP-grasp_dom_sf"/>
</dbReference>
<dbReference type="NCBIfam" id="TIGR01205">
    <property type="entry name" value="D_ala_D_alaTIGR"/>
    <property type="match status" value="1"/>
</dbReference>
<dbReference type="NCBIfam" id="NF002378">
    <property type="entry name" value="PRK01372.1"/>
    <property type="match status" value="1"/>
</dbReference>
<dbReference type="NCBIfam" id="NF002526">
    <property type="entry name" value="PRK01966.1-2"/>
    <property type="match status" value="1"/>
</dbReference>
<dbReference type="NCBIfam" id="NF002528">
    <property type="entry name" value="PRK01966.1-4"/>
    <property type="match status" value="1"/>
</dbReference>
<dbReference type="PANTHER" id="PTHR23132">
    <property type="entry name" value="D-ALANINE--D-ALANINE LIGASE"/>
    <property type="match status" value="1"/>
</dbReference>
<dbReference type="PANTHER" id="PTHR23132:SF25">
    <property type="entry name" value="D-ALANINE--D-ALANINE LIGASE A"/>
    <property type="match status" value="1"/>
</dbReference>
<dbReference type="Pfam" id="PF07478">
    <property type="entry name" value="Dala_Dala_lig_C"/>
    <property type="match status" value="1"/>
</dbReference>
<dbReference type="Pfam" id="PF01820">
    <property type="entry name" value="Dala_Dala_lig_N"/>
    <property type="match status" value="1"/>
</dbReference>
<dbReference type="PIRSF" id="PIRSF039102">
    <property type="entry name" value="Ddl/VanB"/>
    <property type="match status" value="1"/>
</dbReference>
<dbReference type="SUPFAM" id="SSF56059">
    <property type="entry name" value="Glutathione synthetase ATP-binding domain-like"/>
    <property type="match status" value="1"/>
</dbReference>
<dbReference type="SUPFAM" id="SSF52440">
    <property type="entry name" value="PreATP-grasp domain"/>
    <property type="match status" value="1"/>
</dbReference>
<dbReference type="PROSITE" id="PS50975">
    <property type="entry name" value="ATP_GRASP"/>
    <property type="match status" value="1"/>
</dbReference>
<dbReference type="PROSITE" id="PS00843">
    <property type="entry name" value="DALA_DALA_LIGASE_1"/>
    <property type="match status" value="1"/>
</dbReference>
<dbReference type="PROSITE" id="PS00844">
    <property type="entry name" value="DALA_DALA_LIGASE_2"/>
    <property type="match status" value="1"/>
</dbReference>
<comment type="function">
    <text evidence="2">Cell wall formation.</text>
</comment>
<comment type="catalytic activity">
    <reaction evidence="2">
        <text>2 D-alanine + ATP = D-alanyl-D-alanine + ADP + phosphate + H(+)</text>
        <dbReference type="Rhea" id="RHEA:11224"/>
        <dbReference type="ChEBI" id="CHEBI:15378"/>
        <dbReference type="ChEBI" id="CHEBI:30616"/>
        <dbReference type="ChEBI" id="CHEBI:43474"/>
        <dbReference type="ChEBI" id="CHEBI:57416"/>
        <dbReference type="ChEBI" id="CHEBI:57822"/>
        <dbReference type="ChEBI" id="CHEBI:456216"/>
        <dbReference type="EC" id="6.3.2.4"/>
    </reaction>
</comment>
<comment type="cofactor">
    <cofactor evidence="1">
        <name>Mg(2+)</name>
        <dbReference type="ChEBI" id="CHEBI:18420"/>
    </cofactor>
    <cofactor evidence="1">
        <name>Mn(2+)</name>
        <dbReference type="ChEBI" id="CHEBI:29035"/>
    </cofactor>
    <text evidence="1">Binds 2 magnesium or manganese ions per subunit.</text>
</comment>
<comment type="pathway">
    <text evidence="2">Cell wall biogenesis; peptidoglycan biosynthesis.</text>
</comment>
<comment type="subcellular location">
    <subcellularLocation>
        <location evidence="2">Cytoplasm</location>
    </subcellularLocation>
</comment>
<comment type="similarity">
    <text evidence="2">Belongs to the D-alanine--D-alanine ligase family.</text>
</comment>